<dbReference type="EC" id="5.4.2.10" evidence="1"/>
<dbReference type="EMBL" id="AM711867">
    <property type="protein sequence ID" value="CAN02661.1"/>
    <property type="molecule type" value="Genomic_DNA"/>
</dbReference>
<dbReference type="RefSeq" id="WP_012039267.1">
    <property type="nucleotide sequence ID" value="NC_009480.1"/>
</dbReference>
<dbReference type="SMR" id="A5CU74"/>
<dbReference type="KEGG" id="cmi:CMM_2578"/>
<dbReference type="eggNOG" id="COG1109">
    <property type="taxonomic scope" value="Bacteria"/>
</dbReference>
<dbReference type="HOGENOM" id="CLU_016950_7_0_11"/>
<dbReference type="OrthoDB" id="9803322at2"/>
<dbReference type="Proteomes" id="UP000001564">
    <property type="component" value="Chromosome"/>
</dbReference>
<dbReference type="GO" id="GO:0005829">
    <property type="term" value="C:cytosol"/>
    <property type="evidence" value="ECO:0007669"/>
    <property type="project" value="TreeGrafter"/>
</dbReference>
<dbReference type="GO" id="GO:0000287">
    <property type="term" value="F:magnesium ion binding"/>
    <property type="evidence" value="ECO:0007669"/>
    <property type="project" value="UniProtKB-UniRule"/>
</dbReference>
<dbReference type="GO" id="GO:0008966">
    <property type="term" value="F:phosphoglucosamine mutase activity"/>
    <property type="evidence" value="ECO:0007669"/>
    <property type="project" value="UniProtKB-UniRule"/>
</dbReference>
<dbReference type="GO" id="GO:0004615">
    <property type="term" value="F:phosphomannomutase activity"/>
    <property type="evidence" value="ECO:0007669"/>
    <property type="project" value="TreeGrafter"/>
</dbReference>
<dbReference type="GO" id="GO:0005975">
    <property type="term" value="P:carbohydrate metabolic process"/>
    <property type="evidence" value="ECO:0007669"/>
    <property type="project" value="InterPro"/>
</dbReference>
<dbReference type="GO" id="GO:0009252">
    <property type="term" value="P:peptidoglycan biosynthetic process"/>
    <property type="evidence" value="ECO:0007669"/>
    <property type="project" value="TreeGrafter"/>
</dbReference>
<dbReference type="GO" id="GO:0006048">
    <property type="term" value="P:UDP-N-acetylglucosamine biosynthetic process"/>
    <property type="evidence" value="ECO:0007669"/>
    <property type="project" value="TreeGrafter"/>
</dbReference>
<dbReference type="CDD" id="cd05802">
    <property type="entry name" value="GlmM"/>
    <property type="match status" value="1"/>
</dbReference>
<dbReference type="FunFam" id="3.30.310.50:FF:000001">
    <property type="entry name" value="Phosphoglucosamine mutase"/>
    <property type="match status" value="1"/>
</dbReference>
<dbReference type="FunFam" id="3.40.120.10:FF:000001">
    <property type="entry name" value="Phosphoglucosamine mutase"/>
    <property type="match status" value="1"/>
</dbReference>
<dbReference type="FunFam" id="3.40.120.10:FF:000002">
    <property type="entry name" value="Phosphoglucosamine mutase"/>
    <property type="match status" value="1"/>
</dbReference>
<dbReference type="Gene3D" id="3.40.120.10">
    <property type="entry name" value="Alpha-D-Glucose-1,6-Bisphosphate, subunit A, domain 3"/>
    <property type="match status" value="3"/>
</dbReference>
<dbReference type="Gene3D" id="3.30.310.50">
    <property type="entry name" value="Alpha-D-phosphohexomutase, C-terminal domain"/>
    <property type="match status" value="1"/>
</dbReference>
<dbReference type="HAMAP" id="MF_01554_B">
    <property type="entry name" value="GlmM_B"/>
    <property type="match status" value="1"/>
</dbReference>
<dbReference type="InterPro" id="IPR005844">
    <property type="entry name" value="A-D-PHexomutase_a/b/a-I"/>
</dbReference>
<dbReference type="InterPro" id="IPR016055">
    <property type="entry name" value="A-D-PHexomutase_a/b/a-I/II/III"/>
</dbReference>
<dbReference type="InterPro" id="IPR005845">
    <property type="entry name" value="A-D-PHexomutase_a/b/a-II"/>
</dbReference>
<dbReference type="InterPro" id="IPR005846">
    <property type="entry name" value="A-D-PHexomutase_a/b/a-III"/>
</dbReference>
<dbReference type="InterPro" id="IPR005843">
    <property type="entry name" value="A-D-PHexomutase_C"/>
</dbReference>
<dbReference type="InterPro" id="IPR036900">
    <property type="entry name" value="A-D-PHexomutase_C_sf"/>
</dbReference>
<dbReference type="InterPro" id="IPR016066">
    <property type="entry name" value="A-D-PHexomutase_CS"/>
</dbReference>
<dbReference type="InterPro" id="IPR005841">
    <property type="entry name" value="Alpha-D-phosphohexomutase_SF"/>
</dbReference>
<dbReference type="InterPro" id="IPR006352">
    <property type="entry name" value="GlmM_bact"/>
</dbReference>
<dbReference type="InterPro" id="IPR050060">
    <property type="entry name" value="Phosphoglucosamine_mutase"/>
</dbReference>
<dbReference type="NCBIfam" id="TIGR01455">
    <property type="entry name" value="glmM"/>
    <property type="match status" value="1"/>
</dbReference>
<dbReference type="PANTHER" id="PTHR42946:SF1">
    <property type="entry name" value="PHOSPHOGLUCOMUTASE (ALPHA-D-GLUCOSE-1,6-BISPHOSPHATE-DEPENDENT)"/>
    <property type="match status" value="1"/>
</dbReference>
<dbReference type="PANTHER" id="PTHR42946">
    <property type="entry name" value="PHOSPHOHEXOSE MUTASE"/>
    <property type="match status" value="1"/>
</dbReference>
<dbReference type="Pfam" id="PF02878">
    <property type="entry name" value="PGM_PMM_I"/>
    <property type="match status" value="1"/>
</dbReference>
<dbReference type="Pfam" id="PF02879">
    <property type="entry name" value="PGM_PMM_II"/>
    <property type="match status" value="1"/>
</dbReference>
<dbReference type="Pfam" id="PF02880">
    <property type="entry name" value="PGM_PMM_III"/>
    <property type="match status" value="1"/>
</dbReference>
<dbReference type="Pfam" id="PF00408">
    <property type="entry name" value="PGM_PMM_IV"/>
    <property type="match status" value="1"/>
</dbReference>
<dbReference type="PRINTS" id="PR00509">
    <property type="entry name" value="PGMPMM"/>
</dbReference>
<dbReference type="SUPFAM" id="SSF55957">
    <property type="entry name" value="Phosphoglucomutase, C-terminal domain"/>
    <property type="match status" value="1"/>
</dbReference>
<dbReference type="SUPFAM" id="SSF53738">
    <property type="entry name" value="Phosphoglucomutase, first 3 domains"/>
    <property type="match status" value="3"/>
</dbReference>
<dbReference type="PROSITE" id="PS00710">
    <property type="entry name" value="PGM_PMM"/>
    <property type="match status" value="1"/>
</dbReference>
<feature type="chain" id="PRO_1000068899" description="Phosphoglucosamine mutase">
    <location>
        <begin position="1"/>
        <end position="437"/>
    </location>
</feature>
<feature type="active site" description="Phosphoserine intermediate" evidence="1">
    <location>
        <position position="93"/>
    </location>
</feature>
<feature type="binding site" description="via phosphate group" evidence="1">
    <location>
        <position position="93"/>
    </location>
    <ligand>
        <name>Mg(2+)</name>
        <dbReference type="ChEBI" id="CHEBI:18420"/>
    </ligand>
</feature>
<feature type="binding site" evidence="1">
    <location>
        <position position="230"/>
    </location>
    <ligand>
        <name>Mg(2+)</name>
        <dbReference type="ChEBI" id="CHEBI:18420"/>
    </ligand>
</feature>
<feature type="binding site" evidence="1">
    <location>
        <position position="232"/>
    </location>
    <ligand>
        <name>Mg(2+)</name>
        <dbReference type="ChEBI" id="CHEBI:18420"/>
    </ligand>
</feature>
<feature type="binding site" evidence="1">
    <location>
        <position position="234"/>
    </location>
    <ligand>
        <name>Mg(2+)</name>
        <dbReference type="ChEBI" id="CHEBI:18420"/>
    </ligand>
</feature>
<feature type="modified residue" description="Phosphoserine" evidence="1">
    <location>
        <position position="93"/>
    </location>
</feature>
<organism>
    <name type="scientific">Clavibacter michiganensis subsp. michiganensis (strain NCPPB 382)</name>
    <dbReference type="NCBI Taxonomy" id="443906"/>
    <lineage>
        <taxon>Bacteria</taxon>
        <taxon>Bacillati</taxon>
        <taxon>Actinomycetota</taxon>
        <taxon>Actinomycetes</taxon>
        <taxon>Micrococcales</taxon>
        <taxon>Microbacteriaceae</taxon>
        <taxon>Clavibacter</taxon>
    </lineage>
</organism>
<sequence length="437" mass="45704">MPRLFGTDGVRGLANGETITADLALRLAQAAAHVLGQDARDPRVSGEFIAAAVAAGLASSGVDVFDAGVIPTPATAYLIADFDADFGVMISASHNPAPDNGIKFFAAGGRKLADELEDRIEAQLSRPVLLPTGADVGRIRRFADAEDRYVLHLLGTLQHRLDGIHVVLDCAHGAAAGISPEVFTDAGARVTVIGNDPDGMNINDRVGSTHLDLLAEAVLAHGADVGIAHDGDADRCLAVDHTGAIIDGDQIMAVLALSMARRGLLAERTLVATVMSNLGLRIAMAENDITVMQTRVGDRYVLEAMNEGGYSLGGEQSGHLVIAEHATTGDGILTGIQLLGEMAATGKSLHELASVMTVYPQVMINVRGVDRDRVGDDAELNAAVARAEAELGDTGRILMRASGTEPMIRVMVEAADQATAERHAEELAALVTERLAI</sequence>
<keyword id="KW-0413">Isomerase</keyword>
<keyword id="KW-0460">Magnesium</keyword>
<keyword id="KW-0479">Metal-binding</keyword>
<keyword id="KW-0597">Phosphoprotein</keyword>
<gene>
    <name evidence="1" type="primary">glmM</name>
    <name type="ordered locus">CMM_2578</name>
</gene>
<proteinExistence type="inferred from homology"/>
<accession>A5CU74</accession>
<comment type="function">
    <text evidence="1">Catalyzes the conversion of glucosamine-6-phosphate to glucosamine-1-phosphate.</text>
</comment>
<comment type="catalytic activity">
    <reaction evidence="1">
        <text>alpha-D-glucosamine 1-phosphate = D-glucosamine 6-phosphate</text>
        <dbReference type="Rhea" id="RHEA:23424"/>
        <dbReference type="ChEBI" id="CHEBI:58516"/>
        <dbReference type="ChEBI" id="CHEBI:58725"/>
        <dbReference type="EC" id="5.4.2.10"/>
    </reaction>
</comment>
<comment type="cofactor">
    <cofactor evidence="1">
        <name>Mg(2+)</name>
        <dbReference type="ChEBI" id="CHEBI:18420"/>
    </cofactor>
    <text evidence="1">Binds 1 Mg(2+) ion per subunit.</text>
</comment>
<comment type="PTM">
    <text evidence="1">Activated by phosphorylation.</text>
</comment>
<comment type="similarity">
    <text evidence="1">Belongs to the phosphohexose mutase family.</text>
</comment>
<reference key="1">
    <citation type="journal article" date="2008" name="J. Bacteriol.">
        <title>The genome sequence of the tomato-pathogenic actinomycete Clavibacter michiganensis subsp. michiganensis NCPPB382 reveals a large island involved in pathogenicity.</title>
        <authorList>
            <person name="Gartemann K.-H."/>
            <person name="Abt B."/>
            <person name="Bekel T."/>
            <person name="Burger A."/>
            <person name="Engemann J."/>
            <person name="Fluegel M."/>
            <person name="Gaigalat L."/>
            <person name="Goesmann A."/>
            <person name="Graefen I."/>
            <person name="Kalinowski J."/>
            <person name="Kaup O."/>
            <person name="Kirchner O."/>
            <person name="Krause L."/>
            <person name="Linke B."/>
            <person name="McHardy A."/>
            <person name="Meyer F."/>
            <person name="Pohle S."/>
            <person name="Rueckert C."/>
            <person name="Schneiker S."/>
            <person name="Zellermann E.-M."/>
            <person name="Puehler A."/>
            <person name="Eichenlaub R."/>
            <person name="Kaiser O."/>
            <person name="Bartels D."/>
        </authorList>
    </citation>
    <scope>NUCLEOTIDE SEQUENCE [LARGE SCALE GENOMIC DNA]</scope>
    <source>
        <strain>NCPPB 382</strain>
    </source>
</reference>
<protein>
    <recommendedName>
        <fullName evidence="1">Phosphoglucosamine mutase</fullName>
        <ecNumber evidence="1">5.4.2.10</ecNumber>
    </recommendedName>
</protein>
<evidence type="ECO:0000255" key="1">
    <source>
        <dbReference type="HAMAP-Rule" id="MF_01554"/>
    </source>
</evidence>
<name>GLMM_CLAM3</name>